<evidence type="ECO:0000255" key="1">
    <source>
        <dbReference type="HAMAP-Rule" id="MF_01445"/>
    </source>
</evidence>
<organism>
    <name type="scientific">Shewanella baltica (strain OS185)</name>
    <dbReference type="NCBI Taxonomy" id="402882"/>
    <lineage>
        <taxon>Bacteria</taxon>
        <taxon>Pseudomonadati</taxon>
        <taxon>Pseudomonadota</taxon>
        <taxon>Gammaproteobacteria</taxon>
        <taxon>Alteromonadales</taxon>
        <taxon>Shewanellaceae</taxon>
        <taxon>Shewanella</taxon>
    </lineage>
</organism>
<accession>A6WKK4</accession>
<name>TSAD_SHEB8</name>
<dbReference type="EC" id="2.3.1.234" evidence="1"/>
<dbReference type="EMBL" id="CP000753">
    <property type="protein sequence ID" value="ABS07343.1"/>
    <property type="molecule type" value="Genomic_DNA"/>
</dbReference>
<dbReference type="RefSeq" id="WP_006085036.1">
    <property type="nucleotide sequence ID" value="NC_009665.1"/>
</dbReference>
<dbReference type="SMR" id="A6WKK4"/>
<dbReference type="GeneID" id="11771501"/>
<dbReference type="KEGG" id="sbm:Shew185_1192"/>
<dbReference type="HOGENOM" id="CLU_023208_0_2_6"/>
<dbReference type="GO" id="GO:0005737">
    <property type="term" value="C:cytoplasm"/>
    <property type="evidence" value="ECO:0007669"/>
    <property type="project" value="UniProtKB-SubCell"/>
</dbReference>
<dbReference type="GO" id="GO:0005506">
    <property type="term" value="F:iron ion binding"/>
    <property type="evidence" value="ECO:0007669"/>
    <property type="project" value="UniProtKB-UniRule"/>
</dbReference>
<dbReference type="GO" id="GO:0061711">
    <property type="term" value="F:N(6)-L-threonylcarbamoyladenine synthase activity"/>
    <property type="evidence" value="ECO:0007669"/>
    <property type="project" value="UniProtKB-EC"/>
</dbReference>
<dbReference type="GO" id="GO:0002949">
    <property type="term" value="P:tRNA threonylcarbamoyladenosine modification"/>
    <property type="evidence" value="ECO:0007669"/>
    <property type="project" value="UniProtKB-UniRule"/>
</dbReference>
<dbReference type="CDD" id="cd24133">
    <property type="entry name" value="ASKHA_NBD_TsaD_bac"/>
    <property type="match status" value="1"/>
</dbReference>
<dbReference type="FunFam" id="3.30.420.40:FF:000031">
    <property type="entry name" value="tRNA N6-adenosine threonylcarbamoyltransferase"/>
    <property type="match status" value="1"/>
</dbReference>
<dbReference type="Gene3D" id="3.30.420.40">
    <property type="match status" value="2"/>
</dbReference>
<dbReference type="HAMAP" id="MF_01445">
    <property type="entry name" value="TsaD"/>
    <property type="match status" value="1"/>
</dbReference>
<dbReference type="InterPro" id="IPR043129">
    <property type="entry name" value="ATPase_NBD"/>
</dbReference>
<dbReference type="InterPro" id="IPR000905">
    <property type="entry name" value="Gcp-like_dom"/>
</dbReference>
<dbReference type="InterPro" id="IPR017861">
    <property type="entry name" value="KAE1/TsaD"/>
</dbReference>
<dbReference type="InterPro" id="IPR017860">
    <property type="entry name" value="Peptidase_M22_CS"/>
</dbReference>
<dbReference type="InterPro" id="IPR022450">
    <property type="entry name" value="TsaD"/>
</dbReference>
<dbReference type="NCBIfam" id="TIGR00329">
    <property type="entry name" value="gcp_kae1"/>
    <property type="match status" value="1"/>
</dbReference>
<dbReference type="NCBIfam" id="TIGR03723">
    <property type="entry name" value="T6A_TsaD_YgjD"/>
    <property type="match status" value="1"/>
</dbReference>
<dbReference type="PANTHER" id="PTHR11735">
    <property type="entry name" value="TRNA N6-ADENOSINE THREONYLCARBAMOYLTRANSFERASE"/>
    <property type="match status" value="1"/>
</dbReference>
<dbReference type="PANTHER" id="PTHR11735:SF6">
    <property type="entry name" value="TRNA N6-ADENOSINE THREONYLCARBAMOYLTRANSFERASE, MITOCHONDRIAL"/>
    <property type="match status" value="1"/>
</dbReference>
<dbReference type="Pfam" id="PF00814">
    <property type="entry name" value="TsaD"/>
    <property type="match status" value="1"/>
</dbReference>
<dbReference type="PRINTS" id="PR00789">
    <property type="entry name" value="OSIALOPTASE"/>
</dbReference>
<dbReference type="SUPFAM" id="SSF53067">
    <property type="entry name" value="Actin-like ATPase domain"/>
    <property type="match status" value="2"/>
</dbReference>
<dbReference type="PROSITE" id="PS01016">
    <property type="entry name" value="GLYCOPROTEASE"/>
    <property type="match status" value="1"/>
</dbReference>
<protein>
    <recommendedName>
        <fullName evidence="1">tRNA N6-adenosine threonylcarbamoyltransferase</fullName>
        <ecNumber evidence="1">2.3.1.234</ecNumber>
    </recommendedName>
    <alternativeName>
        <fullName evidence="1">N6-L-threonylcarbamoyladenine synthase</fullName>
        <shortName evidence="1">t(6)A synthase</shortName>
    </alternativeName>
    <alternativeName>
        <fullName evidence="1">t(6)A37 threonylcarbamoyladenosine biosynthesis protein TsaD</fullName>
    </alternativeName>
    <alternativeName>
        <fullName evidence="1">tRNA threonylcarbamoyladenosine biosynthesis protein TsaD</fullName>
    </alternativeName>
</protein>
<comment type="function">
    <text evidence="1">Required for the formation of a threonylcarbamoyl group on adenosine at position 37 (t(6)A37) in tRNAs that read codons beginning with adenine. Is involved in the transfer of the threonylcarbamoyl moiety of threonylcarbamoyl-AMP (TC-AMP) to the N6 group of A37, together with TsaE and TsaB. TsaD likely plays a direct catalytic role in this reaction.</text>
</comment>
<comment type="catalytic activity">
    <reaction evidence="1">
        <text>L-threonylcarbamoyladenylate + adenosine(37) in tRNA = N(6)-L-threonylcarbamoyladenosine(37) in tRNA + AMP + H(+)</text>
        <dbReference type="Rhea" id="RHEA:37059"/>
        <dbReference type="Rhea" id="RHEA-COMP:10162"/>
        <dbReference type="Rhea" id="RHEA-COMP:10163"/>
        <dbReference type="ChEBI" id="CHEBI:15378"/>
        <dbReference type="ChEBI" id="CHEBI:73682"/>
        <dbReference type="ChEBI" id="CHEBI:74411"/>
        <dbReference type="ChEBI" id="CHEBI:74418"/>
        <dbReference type="ChEBI" id="CHEBI:456215"/>
        <dbReference type="EC" id="2.3.1.234"/>
    </reaction>
</comment>
<comment type="cofactor">
    <cofactor evidence="1">
        <name>Fe(2+)</name>
        <dbReference type="ChEBI" id="CHEBI:29033"/>
    </cofactor>
    <text evidence="1">Binds 1 Fe(2+) ion per subunit.</text>
</comment>
<comment type="subcellular location">
    <subcellularLocation>
        <location evidence="1">Cytoplasm</location>
    </subcellularLocation>
</comment>
<comment type="similarity">
    <text evidence="1">Belongs to the KAE1 / TsaD family.</text>
</comment>
<reference key="1">
    <citation type="submission" date="2007-07" db="EMBL/GenBank/DDBJ databases">
        <title>Complete sequence of chromosome of Shewanella baltica OS185.</title>
        <authorList>
            <consortium name="US DOE Joint Genome Institute"/>
            <person name="Copeland A."/>
            <person name="Lucas S."/>
            <person name="Lapidus A."/>
            <person name="Barry K."/>
            <person name="Glavina del Rio T."/>
            <person name="Dalin E."/>
            <person name="Tice H."/>
            <person name="Pitluck S."/>
            <person name="Sims D."/>
            <person name="Brettin T."/>
            <person name="Bruce D."/>
            <person name="Detter J.C."/>
            <person name="Han C."/>
            <person name="Schmutz J."/>
            <person name="Larimer F."/>
            <person name="Land M."/>
            <person name="Hauser L."/>
            <person name="Kyrpides N."/>
            <person name="Mikhailova N."/>
            <person name="Brettar I."/>
            <person name="Rodrigues J."/>
            <person name="Konstantinidis K."/>
            <person name="Tiedje J."/>
            <person name="Richardson P."/>
        </authorList>
    </citation>
    <scope>NUCLEOTIDE SEQUENCE [LARGE SCALE GENOMIC DNA]</scope>
    <source>
        <strain>OS185</strain>
    </source>
</reference>
<proteinExistence type="inferred from homology"/>
<gene>
    <name evidence="1" type="primary">tsaD</name>
    <name type="synonym">gcp</name>
    <name type="ordered locus">Shew185_1192</name>
</gene>
<sequence>MRVLGIETSCDETGIAVYDDELGLLSHTLYSQVKLHADYGGVVPELASRDHVRKIVPLIRQALKDANTEMADLDGIAYTKGPGLIGALLVGACVGRSLAFAWDKPAIGVHHMEGHLLAPMLEDDAPEFPFVALLVSGGHSMLVKVDGIGRYEVLGESVDDAAGEAFDKTAKLMGLDYPGGPRLAKLAAKGLPAGYKFPRPMTDRPGLDFSFSGLKTFTANTIAAEPDDEQTRANIARAFEEAVVDTLAIKCRRALKQTGYNRLVIAGGVSANTRLRETLAEMMNSLGGQVFYPRGEFCTDNGAMIAFAGLQRLKAGQHEDLAVKGQPRWPLDTLPPVA</sequence>
<keyword id="KW-0012">Acyltransferase</keyword>
<keyword id="KW-0963">Cytoplasm</keyword>
<keyword id="KW-0408">Iron</keyword>
<keyword id="KW-0479">Metal-binding</keyword>
<keyword id="KW-0808">Transferase</keyword>
<keyword id="KW-0819">tRNA processing</keyword>
<feature type="chain" id="PRO_1000024452" description="tRNA N6-adenosine threonylcarbamoyltransferase">
    <location>
        <begin position="1"/>
        <end position="338"/>
    </location>
</feature>
<feature type="binding site" evidence="1">
    <location>
        <position position="111"/>
    </location>
    <ligand>
        <name>Fe cation</name>
        <dbReference type="ChEBI" id="CHEBI:24875"/>
    </ligand>
</feature>
<feature type="binding site" evidence="1">
    <location>
        <position position="115"/>
    </location>
    <ligand>
        <name>Fe cation</name>
        <dbReference type="ChEBI" id="CHEBI:24875"/>
    </ligand>
</feature>
<feature type="binding site" evidence="1">
    <location>
        <begin position="134"/>
        <end position="138"/>
    </location>
    <ligand>
        <name>substrate</name>
    </ligand>
</feature>
<feature type="binding site" evidence="1">
    <location>
        <position position="167"/>
    </location>
    <ligand>
        <name>substrate</name>
    </ligand>
</feature>
<feature type="binding site" evidence="1">
    <location>
        <position position="180"/>
    </location>
    <ligand>
        <name>substrate</name>
    </ligand>
</feature>
<feature type="binding site" evidence="1">
    <location>
        <position position="272"/>
    </location>
    <ligand>
        <name>substrate</name>
    </ligand>
</feature>
<feature type="binding site" evidence="1">
    <location>
        <position position="300"/>
    </location>
    <ligand>
        <name>Fe cation</name>
        <dbReference type="ChEBI" id="CHEBI:24875"/>
    </ligand>
</feature>